<gene>
    <name evidence="1" type="primary">lapB</name>
    <name type="synonym">yciM</name>
    <name type="ordered locus">c1749</name>
</gene>
<evidence type="ECO:0000255" key="1">
    <source>
        <dbReference type="HAMAP-Rule" id="MF_00994"/>
    </source>
</evidence>
<comment type="function">
    <text evidence="1">Modulates cellular lipopolysaccharide (LPS) levels by regulating LpxC, which is involved in lipid A biosynthesis. May act by modulating the proteolytic activity of FtsH towards LpxC. May also coordinate assembly of proteins involved in LPS synthesis at the plasma membrane.</text>
</comment>
<comment type="subcellular location">
    <subcellularLocation>
        <location evidence="1">Cell inner membrane</location>
        <topology evidence="1">Single-pass membrane protein</topology>
        <orientation evidence="1">Cytoplasmic side</orientation>
    </subcellularLocation>
</comment>
<comment type="similarity">
    <text evidence="1">Belongs to the LapB family.</text>
</comment>
<accession>P0AB59</accession>
<accession>P45576</accession>
<accession>P76836</accession>
<proteinExistence type="evidence at protein level"/>
<feature type="chain" id="PRO_0000042576" description="Lipopolysaccharide assembly protein B">
    <location>
        <begin position="1"/>
        <end position="389"/>
    </location>
</feature>
<feature type="transmembrane region" description="Helical" evidence="1">
    <location>
        <begin position="1"/>
        <end position="20"/>
    </location>
</feature>
<feature type="topological domain" description="Cytoplasmic" evidence="1">
    <location>
        <begin position="21"/>
        <end position="389"/>
    </location>
</feature>
<feature type="repeat" description="TPR 1" evidence="1">
    <location>
        <begin position="35"/>
        <end position="68"/>
    </location>
</feature>
<feature type="repeat" description="TPR 2" evidence="1">
    <location>
        <begin position="69"/>
        <end position="102"/>
    </location>
</feature>
<feature type="repeat" description="TPR 3" evidence="1">
    <location>
        <begin position="107"/>
        <end position="140"/>
    </location>
</feature>
<feature type="repeat" description="TPR 4" evidence="1">
    <location>
        <begin position="142"/>
        <end position="174"/>
    </location>
</feature>
<feature type="repeat" description="TPR 5" evidence="1">
    <location>
        <begin position="180"/>
        <end position="213"/>
    </location>
</feature>
<feature type="repeat" description="TPR 6" evidence="1">
    <location>
        <begin position="214"/>
        <end position="247"/>
    </location>
</feature>
<feature type="repeat" description="TPR 7" evidence="1">
    <location>
        <begin position="249"/>
        <end position="282"/>
    </location>
</feature>
<feature type="binding site" evidence="1">
    <location>
        <position position="357"/>
    </location>
    <ligand>
        <name>Fe cation</name>
        <dbReference type="ChEBI" id="CHEBI:24875"/>
    </ligand>
</feature>
<feature type="binding site" evidence="1">
    <location>
        <position position="360"/>
    </location>
    <ligand>
        <name>Fe cation</name>
        <dbReference type="ChEBI" id="CHEBI:24875"/>
    </ligand>
</feature>
<feature type="binding site" evidence="1">
    <location>
        <position position="371"/>
    </location>
    <ligand>
        <name>Fe cation</name>
        <dbReference type="ChEBI" id="CHEBI:24875"/>
    </ligand>
</feature>
<feature type="binding site" evidence="1">
    <location>
        <position position="374"/>
    </location>
    <ligand>
        <name>Fe cation</name>
        <dbReference type="ChEBI" id="CHEBI:24875"/>
    </ligand>
</feature>
<keyword id="KW-0002">3D-structure</keyword>
<keyword id="KW-0997">Cell inner membrane</keyword>
<keyword id="KW-1003">Cell membrane</keyword>
<keyword id="KW-0408">Iron</keyword>
<keyword id="KW-0472">Membrane</keyword>
<keyword id="KW-0479">Metal-binding</keyword>
<keyword id="KW-1185">Reference proteome</keyword>
<keyword id="KW-0677">Repeat</keyword>
<keyword id="KW-0802">TPR repeat</keyword>
<keyword id="KW-0812">Transmembrane</keyword>
<keyword id="KW-1133">Transmembrane helix</keyword>
<dbReference type="EMBL" id="AE014075">
    <property type="protein sequence ID" value="AAN80215.1"/>
    <property type="molecule type" value="Genomic_DNA"/>
</dbReference>
<dbReference type="RefSeq" id="WP_000891353.1">
    <property type="nucleotide sequence ID" value="NZ_CP051263.1"/>
</dbReference>
<dbReference type="PDB" id="8V24">
    <property type="method" value="EM"/>
    <property type="resolution" value="3.60 A"/>
    <property type="chains" value="A/C=1-389"/>
</dbReference>
<dbReference type="PDBsum" id="8V24"/>
<dbReference type="EMDB" id="EMD-42897"/>
<dbReference type="SMR" id="P0AB59"/>
<dbReference type="STRING" id="199310.c1749"/>
<dbReference type="GeneID" id="93775403"/>
<dbReference type="KEGG" id="ecc:c1749"/>
<dbReference type="eggNOG" id="COG2956">
    <property type="taxonomic scope" value="Bacteria"/>
</dbReference>
<dbReference type="HOGENOM" id="CLU_059365_1_0_6"/>
<dbReference type="BioCyc" id="ECOL199310:C1749-MONOMER"/>
<dbReference type="Proteomes" id="UP000001410">
    <property type="component" value="Chromosome"/>
</dbReference>
<dbReference type="GO" id="GO:0009898">
    <property type="term" value="C:cytoplasmic side of plasma membrane"/>
    <property type="evidence" value="ECO:0007669"/>
    <property type="project" value="UniProtKB-UniRule"/>
</dbReference>
<dbReference type="GO" id="GO:0005506">
    <property type="term" value="F:iron ion binding"/>
    <property type="evidence" value="ECO:0007669"/>
    <property type="project" value="UniProtKB-UniRule"/>
</dbReference>
<dbReference type="GO" id="GO:0008653">
    <property type="term" value="P:lipopolysaccharide metabolic process"/>
    <property type="evidence" value="ECO:0007669"/>
    <property type="project" value="InterPro"/>
</dbReference>
<dbReference type="GO" id="GO:0046890">
    <property type="term" value="P:regulation of lipid biosynthetic process"/>
    <property type="evidence" value="ECO:0007669"/>
    <property type="project" value="UniProtKB-UniRule"/>
</dbReference>
<dbReference type="FunFam" id="1.25.40.10:FF:000033">
    <property type="entry name" value="Lipopolysaccharide assembly protein B"/>
    <property type="match status" value="1"/>
</dbReference>
<dbReference type="Gene3D" id="1.25.40.10">
    <property type="entry name" value="Tetratricopeptide repeat domain"/>
    <property type="match status" value="2"/>
</dbReference>
<dbReference type="HAMAP" id="MF_00994">
    <property type="entry name" value="LPS_assembly_LapB"/>
    <property type="match status" value="1"/>
</dbReference>
<dbReference type="InterPro" id="IPR051012">
    <property type="entry name" value="CellSynth/LPSAsmb/PSIAsmb"/>
</dbReference>
<dbReference type="InterPro" id="IPR030865">
    <property type="entry name" value="LapB"/>
</dbReference>
<dbReference type="InterPro" id="IPR041166">
    <property type="entry name" value="Rubredoxin_2"/>
</dbReference>
<dbReference type="InterPro" id="IPR011990">
    <property type="entry name" value="TPR-like_helical_dom_sf"/>
</dbReference>
<dbReference type="InterPro" id="IPR019734">
    <property type="entry name" value="TPR_rpt"/>
</dbReference>
<dbReference type="NCBIfam" id="NF008753">
    <property type="entry name" value="PRK11788.1-1"/>
    <property type="match status" value="1"/>
</dbReference>
<dbReference type="NCBIfam" id="NF008756">
    <property type="entry name" value="PRK11788.1-4"/>
    <property type="match status" value="1"/>
</dbReference>
<dbReference type="NCBIfam" id="NF008757">
    <property type="entry name" value="PRK11788.1-5"/>
    <property type="match status" value="1"/>
</dbReference>
<dbReference type="PANTHER" id="PTHR45586:SF1">
    <property type="entry name" value="LIPOPOLYSACCHARIDE ASSEMBLY PROTEIN B"/>
    <property type="match status" value="1"/>
</dbReference>
<dbReference type="PANTHER" id="PTHR45586">
    <property type="entry name" value="TPR REPEAT-CONTAINING PROTEIN PA4667"/>
    <property type="match status" value="1"/>
</dbReference>
<dbReference type="Pfam" id="PF14559">
    <property type="entry name" value="TPR_19"/>
    <property type="match status" value="1"/>
</dbReference>
<dbReference type="Pfam" id="PF13176">
    <property type="entry name" value="TPR_7"/>
    <property type="match status" value="1"/>
</dbReference>
<dbReference type="Pfam" id="PF18073">
    <property type="entry name" value="Zn_ribbon_LapB"/>
    <property type="match status" value="1"/>
</dbReference>
<dbReference type="SMART" id="SM00028">
    <property type="entry name" value="TPR"/>
    <property type="match status" value="5"/>
</dbReference>
<dbReference type="SUPFAM" id="SSF48452">
    <property type="entry name" value="TPR-like"/>
    <property type="match status" value="2"/>
</dbReference>
<dbReference type="PROSITE" id="PS50005">
    <property type="entry name" value="TPR"/>
    <property type="match status" value="6"/>
</dbReference>
<dbReference type="PROSITE" id="PS50293">
    <property type="entry name" value="TPR_REGION"/>
    <property type="match status" value="1"/>
</dbReference>
<name>LAPB_ECOL6</name>
<protein>
    <recommendedName>
        <fullName evidence="1">Lipopolysaccharide assembly protein B</fullName>
    </recommendedName>
</protein>
<organism>
    <name type="scientific">Escherichia coli O6:H1 (strain CFT073 / ATCC 700928 / UPEC)</name>
    <dbReference type="NCBI Taxonomy" id="199310"/>
    <lineage>
        <taxon>Bacteria</taxon>
        <taxon>Pseudomonadati</taxon>
        <taxon>Pseudomonadota</taxon>
        <taxon>Gammaproteobacteria</taxon>
        <taxon>Enterobacterales</taxon>
        <taxon>Enterobacteriaceae</taxon>
        <taxon>Escherichia</taxon>
    </lineage>
</organism>
<sequence>MLELLFLLLPVAAAYGWYMGRRSAQQNKQDEANRLSRDYVAGVNFLLSNQQDKAVDLFLDMLKEDTGTVEAHLTLGNLFRSRGEVDRAIRIHQTLMESASLTYEQRLLAIQQLGRDYMAAGLYDRAEDMFNQLTDETDFRIGALQQLLQIYQATSEWQKAIDVAERLVKLGKDKQRVEIAHFYCELALQHMASDDLDRAMTLLKKGAAADKNSARVSIMMGRVFMAKGEYAKAVESLQRVISQDRELVSETLEMLQTCYQQLGKTAEWAEFLQRAVEENTGADAELMLADIIEARDGSEAAQVYITRQLQRHPTMRVFHKLMDYHLNEAEEGRAKESLMVLRDMVGEKVRSKPRYRCQKCGFTAYTLYWHCPSCRAWSTIKPIRGLDGL</sequence>
<reference key="1">
    <citation type="journal article" date="2002" name="Proc. Natl. Acad. Sci. U.S.A.">
        <title>Extensive mosaic structure revealed by the complete genome sequence of uropathogenic Escherichia coli.</title>
        <authorList>
            <person name="Welch R.A."/>
            <person name="Burland V."/>
            <person name="Plunkett G. III"/>
            <person name="Redford P."/>
            <person name="Roesch P."/>
            <person name="Rasko D."/>
            <person name="Buckles E.L."/>
            <person name="Liou S.-R."/>
            <person name="Boutin A."/>
            <person name="Hackett J."/>
            <person name="Stroud D."/>
            <person name="Mayhew G.F."/>
            <person name="Rose D.J."/>
            <person name="Zhou S."/>
            <person name="Schwartz D.C."/>
            <person name="Perna N.T."/>
            <person name="Mobley H.L.T."/>
            <person name="Donnenberg M.S."/>
            <person name="Blattner F.R."/>
        </authorList>
    </citation>
    <scope>NUCLEOTIDE SEQUENCE [LARGE SCALE GENOMIC DNA]</scope>
    <source>
        <strain>CFT073 / ATCC 700928 / UPEC</strain>
    </source>
</reference>